<reference key="1">
    <citation type="journal article" date="2003" name="Science">
        <title>Role of mobile DNA in the evolution of vancomycin-resistant Enterococcus faecalis.</title>
        <authorList>
            <person name="Paulsen I.T."/>
            <person name="Banerjei L."/>
            <person name="Myers G.S.A."/>
            <person name="Nelson K.E."/>
            <person name="Seshadri R."/>
            <person name="Read T.D."/>
            <person name="Fouts D.E."/>
            <person name="Eisen J.A."/>
            <person name="Gill S.R."/>
            <person name="Heidelberg J.F."/>
            <person name="Tettelin H."/>
            <person name="Dodson R.J."/>
            <person name="Umayam L.A."/>
            <person name="Brinkac L.M."/>
            <person name="Beanan M.J."/>
            <person name="Daugherty S.C."/>
            <person name="DeBoy R.T."/>
            <person name="Durkin S.A."/>
            <person name="Kolonay J.F."/>
            <person name="Madupu R."/>
            <person name="Nelson W.C."/>
            <person name="Vamathevan J.J."/>
            <person name="Tran B."/>
            <person name="Upton J."/>
            <person name="Hansen T."/>
            <person name="Shetty J."/>
            <person name="Khouri H.M."/>
            <person name="Utterback T.R."/>
            <person name="Radune D."/>
            <person name="Ketchum K.A."/>
            <person name="Dougherty B.A."/>
            <person name="Fraser C.M."/>
        </authorList>
    </citation>
    <scope>NUCLEOTIDE SEQUENCE [LARGE SCALE GENOMIC DNA]</scope>
    <source>
        <strain>ATCC 700802 / V583</strain>
    </source>
</reference>
<proteinExistence type="inferred from homology"/>
<accession>Q836P0</accession>
<comment type="function">
    <text evidence="1">Catalyzes the transfer of the gamma-phosphate of ATP to D-galactose to form alpha-D-galactose-1-phosphate (Gal-1-P).</text>
</comment>
<comment type="catalytic activity">
    <reaction evidence="1">
        <text>alpha-D-galactose + ATP = alpha-D-galactose 1-phosphate + ADP + H(+)</text>
        <dbReference type="Rhea" id="RHEA:13553"/>
        <dbReference type="ChEBI" id="CHEBI:15378"/>
        <dbReference type="ChEBI" id="CHEBI:28061"/>
        <dbReference type="ChEBI" id="CHEBI:30616"/>
        <dbReference type="ChEBI" id="CHEBI:58336"/>
        <dbReference type="ChEBI" id="CHEBI:456216"/>
        <dbReference type="EC" id="2.7.1.6"/>
    </reaction>
</comment>
<comment type="pathway">
    <text evidence="1">Carbohydrate metabolism; galactose metabolism.</text>
</comment>
<comment type="subcellular location">
    <subcellularLocation>
        <location evidence="1">Cytoplasm</location>
    </subcellularLocation>
</comment>
<comment type="similarity">
    <text evidence="1">Belongs to the GHMP kinase family. GalK subfamily.</text>
</comment>
<protein>
    <recommendedName>
        <fullName evidence="1">Galactokinase</fullName>
        <ecNumber evidence="1">2.7.1.6</ecNumber>
    </recommendedName>
    <alternativeName>
        <fullName evidence="1">Galactose kinase</fullName>
    </alternativeName>
</protein>
<feature type="chain" id="PRO_0000184610" description="Galactokinase">
    <location>
        <begin position="1"/>
        <end position="387"/>
    </location>
</feature>
<feature type="active site" description="Proton acceptor" evidence="1">
    <location>
        <position position="173"/>
    </location>
</feature>
<feature type="binding site" evidence="1">
    <location>
        <begin position="32"/>
        <end position="35"/>
    </location>
    <ligand>
        <name>substrate</name>
    </ligand>
</feature>
<feature type="binding site" evidence="1">
    <location>
        <position position="66"/>
    </location>
    <ligand>
        <name>ATP</name>
        <dbReference type="ChEBI" id="CHEBI:30616"/>
    </ligand>
</feature>
<feature type="binding site" evidence="1">
    <location>
        <begin position="123"/>
        <end position="129"/>
    </location>
    <ligand>
        <name>ATP</name>
        <dbReference type="ChEBI" id="CHEBI:30616"/>
    </ligand>
</feature>
<feature type="binding site" evidence="1">
    <location>
        <position position="129"/>
    </location>
    <ligand>
        <name>Mg(2+)</name>
        <dbReference type="ChEBI" id="CHEBI:18420"/>
    </ligand>
</feature>
<feature type="binding site" evidence="1">
    <location>
        <position position="161"/>
    </location>
    <ligand>
        <name>Mg(2+)</name>
        <dbReference type="ChEBI" id="CHEBI:18420"/>
    </ligand>
</feature>
<feature type="binding site" evidence="1">
    <location>
        <position position="223"/>
    </location>
    <ligand>
        <name>substrate</name>
    </ligand>
</feature>
<feature type="site" description="Transition state stabilizer" evidence="1">
    <location>
        <position position="26"/>
    </location>
</feature>
<organism>
    <name type="scientific">Enterococcus faecalis (strain ATCC 700802 / V583)</name>
    <dbReference type="NCBI Taxonomy" id="226185"/>
    <lineage>
        <taxon>Bacteria</taxon>
        <taxon>Bacillati</taxon>
        <taxon>Bacillota</taxon>
        <taxon>Bacilli</taxon>
        <taxon>Lactobacillales</taxon>
        <taxon>Enterococcaceae</taxon>
        <taxon>Enterococcus</taxon>
    </lineage>
</organism>
<name>GAL1_ENTFA</name>
<keyword id="KW-0067">ATP-binding</keyword>
<keyword id="KW-0119">Carbohydrate metabolism</keyword>
<keyword id="KW-0963">Cytoplasm</keyword>
<keyword id="KW-0299">Galactose metabolism</keyword>
<keyword id="KW-0418">Kinase</keyword>
<keyword id="KW-0460">Magnesium</keyword>
<keyword id="KW-0479">Metal-binding</keyword>
<keyword id="KW-0547">Nucleotide-binding</keyword>
<keyword id="KW-1185">Reference proteome</keyword>
<keyword id="KW-0808">Transferase</keyword>
<sequence>MEELLMNRFVEIFGEKGTACYFAPGRINLIGEHTDYNGGHVFPAAITLGTFGVARKRDDQKIRMFSDNFKEVGLIEFSLEDLTYSDSDDWANYPKGVLNYLIESGHNIDSGLDVLFYGTIPNGAGLSSSASIELLMGTICNDLYALHCPMLELVQIGKKVENEFIGVNSGIMDQFAVGMGEKDQAILLDTNNMHYEMVPAKLGEYTIVIMNTNKRRELADSKYNERRAECEEAVRLLQKELSIEFLGELDSETFEQYQALIGDPALIKRARHAVTENERTLLAKQALTEGDLEEFGLLLNASHRSLKEDYEVTGIELDTLVACAQEQPGVLGARMTGAGFGGCSIALVPKQNIDAFIEAVGQSYQDKIGYAADFYPASIDDGARKLF</sequence>
<evidence type="ECO:0000255" key="1">
    <source>
        <dbReference type="HAMAP-Rule" id="MF_00246"/>
    </source>
</evidence>
<dbReference type="EC" id="2.7.1.6" evidence="1"/>
<dbReference type="EMBL" id="AE016830">
    <property type="protein sequence ID" value="AAO80871.1"/>
    <property type="molecule type" value="Genomic_DNA"/>
</dbReference>
<dbReference type="RefSeq" id="NP_814801.1">
    <property type="nucleotide sequence ID" value="NC_004668.1"/>
</dbReference>
<dbReference type="RefSeq" id="WP_002386588.1">
    <property type="nucleotide sequence ID" value="NZ_KE136528.1"/>
</dbReference>
<dbReference type="SMR" id="Q836P0"/>
<dbReference type="STRING" id="226185.EF_1069"/>
<dbReference type="EnsemblBacteria" id="AAO80871">
    <property type="protein sequence ID" value="AAO80871"/>
    <property type="gene ID" value="EF_1069"/>
</dbReference>
<dbReference type="KEGG" id="efa:EF1069"/>
<dbReference type="PATRIC" id="fig|226185.45.peg.2425"/>
<dbReference type="eggNOG" id="COG0153">
    <property type="taxonomic scope" value="Bacteria"/>
</dbReference>
<dbReference type="HOGENOM" id="CLU_017814_2_1_9"/>
<dbReference type="UniPathway" id="UPA00214"/>
<dbReference type="Proteomes" id="UP000001415">
    <property type="component" value="Chromosome"/>
</dbReference>
<dbReference type="GO" id="GO:0005829">
    <property type="term" value="C:cytosol"/>
    <property type="evidence" value="ECO:0007669"/>
    <property type="project" value="TreeGrafter"/>
</dbReference>
<dbReference type="GO" id="GO:0005524">
    <property type="term" value="F:ATP binding"/>
    <property type="evidence" value="ECO:0007669"/>
    <property type="project" value="UniProtKB-UniRule"/>
</dbReference>
<dbReference type="GO" id="GO:0004335">
    <property type="term" value="F:galactokinase activity"/>
    <property type="evidence" value="ECO:0007669"/>
    <property type="project" value="UniProtKB-UniRule"/>
</dbReference>
<dbReference type="GO" id="GO:0000287">
    <property type="term" value="F:magnesium ion binding"/>
    <property type="evidence" value="ECO:0007669"/>
    <property type="project" value="UniProtKB-UniRule"/>
</dbReference>
<dbReference type="GO" id="GO:0006012">
    <property type="term" value="P:galactose metabolic process"/>
    <property type="evidence" value="ECO:0007669"/>
    <property type="project" value="UniProtKB-UniRule"/>
</dbReference>
<dbReference type="FunFam" id="3.30.230.10:FF:000017">
    <property type="entry name" value="Galactokinase"/>
    <property type="match status" value="1"/>
</dbReference>
<dbReference type="FunFam" id="3.30.70.890:FF:000001">
    <property type="entry name" value="Galactokinase"/>
    <property type="match status" value="1"/>
</dbReference>
<dbReference type="Gene3D" id="3.30.230.10">
    <property type="match status" value="1"/>
</dbReference>
<dbReference type="Gene3D" id="3.30.70.890">
    <property type="entry name" value="GHMP kinase, C-terminal domain"/>
    <property type="match status" value="1"/>
</dbReference>
<dbReference type="HAMAP" id="MF_00246">
    <property type="entry name" value="Galactokinase"/>
    <property type="match status" value="1"/>
</dbReference>
<dbReference type="InterPro" id="IPR000705">
    <property type="entry name" value="Galactokinase"/>
</dbReference>
<dbReference type="InterPro" id="IPR022963">
    <property type="entry name" value="Galactokinase_bac"/>
</dbReference>
<dbReference type="InterPro" id="IPR019741">
    <property type="entry name" value="Galactokinase_CS"/>
</dbReference>
<dbReference type="InterPro" id="IPR019539">
    <property type="entry name" value="GalKase_N"/>
</dbReference>
<dbReference type="InterPro" id="IPR013750">
    <property type="entry name" value="GHMP_kinase_C_dom"/>
</dbReference>
<dbReference type="InterPro" id="IPR036554">
    <property type="entry name" value="GHMP_kinase_C_sf"/>
</dbReference>
<dbReference type="InterPro" id="IPR006204">
    <property type="entry name" value="GHMP_kinase_N_dom"/>
</dbReference>
<dbReference type="InterPro" id="IPR006203">
    <property type="entry name" value="GHMP_knse_ATP-bd_CS"/>
</dbReference>
<dbReference type="InterPro" id="IPR006206">
    <property type="entry name" value="Mevalonate/galactokinase"/>
</dbReference>
<dbReference type="InterPro" id="IPR020568">
    <property type="entry name" value="Ribosomal_Su5_D2-typ_SF"/>
</dbReference>
<dbReference type="InterPro" id="IPR014721">
    <property type="entry name" value="Ribsml_uS5_D2-typ_fold_subgr"/>
</dbReference>
<dbReference type="NCBIfam" id="TIGR00131">
    <property type="entry name" value="gal_kin"/>
    <property type="match status" value="1"/>
</dbReference>
<dbReference type="NCBIfam" id="NF003705">
    <property type="entry name" value="PRK05322.1"/>
    <property type="match status" value="1"/>
</dbReference>
<dbReference type="PANTHER" id="PTHR10457:SF7">
    <property type="entry name" value="GALACTOKINASE-RELATED"/>
    <property type="match status" value="1"/>
</dbReference>
<dbReference type="PANTHER" id="PTHR10457">
    <property type="entry name" value="MEVALONATE KINASE/GALACTOKINASE"/>
    <property type="match status" value="1"/>
</dbReference>
<dbReference type="Pfam" id="PF10509">
    <property type="entry name" value="GalKase_gal_bdg"/>
    <property type="match status" value="1"/>
</dbReference>
<dbReference type="Pfam" id="PF08544">
    <property type="entry name" value="GHMP_kinases_C"/>
    <property type="match status" value="1"/>
</dbReference>
<dbReference type="Pfam" id="PF00288">
    <property type="entry name" value="GHMP_kinases_N"/>
    <property type="match status" value="1"/>
</dbReference>
<dbReference type="PIRSF" id="PIRSF000530">
    <property type="entry name" value="Galactokinase"/>
    <property type="match status" value="1"/>
</dbReference>
<dbReference type="PRINTS" id="PR00473">
    <property type="entry name" value="GALCTOKINASE"/>
</dbReference>
<dbReference type="PRINTS" id="PR00959">
    <property type="entry name" value="MEVGALKINASE"/>
</dbReference>
<dbReference type="SUPFAM" id="SSF55060">
    <property type="entry name" value="GHMP Kinase, C-terminal domain"/>
    <property type="match status" value="1"/>
</dbReference>
<dbReference type="SUPFAM" id="SSF54211">
    <property type="entry name" value="Ribosomal protein S5 domain 2-like"/>
    <property type="match status" value="1"/>
</dbReference>
<dbReference type="PROSITE" id="PS00106">
    <property type="entry name" value="GALACTOKINASE"/>
    <property type="match status" value="1"/>
</dbReference>
<dbReference type="PROSITE" id="PS00627">
    <property type="entry name" value="GHMP_KINASES_ATP"/>
    <property type="match status" value="1"/>
</dbReference>
<gene>
    <name evidence="1" type="primary">galK</name>
    <name type="ordered locus">EF_1069</name>
</gene>